<dbReference type="EMBL" id="BX571856">
    <property type="status" value="NOT_ANNOTATED_CDS"/>
    <property type="molecule type" value="Genomic_DNA"/>
</dbReference>
<dbReference type="Proteomes" id="UP000000596">
    <property type="component" value="Chromosome"/>
</dbReference>
<dbReference type="GO" id="GO:0031640">
    <property type="term" value="P:killing of cells of another organism"/>
    <property type="evidence" value="ECO:0007669"/>
    <property type="project" value="UniProtKB-KW"/>
</dbReference>
<dbReference type="InterPro" id="IPR031429">
    <property type="entry name" value="PSM_alpha"/>
</dbReference>
<dbReference type="NCBIfam" id="NF033425">
    <property type="entry name" value="PSM_alpha_1_2"/>
    <property type="match status" value="1"/>
</dbReference>
<dbReference type="Pfam" id="PF17063">
    <property type="entry name" value="PSMalpha"/>
    <property type="match status" value="1"/>
</dbReference>
<comment type="function">
    <text evidence="1">Peptide which can recruit, activate and subsequently lyse human neutrophils, thus eliminating the main cellular defense against infection.</text>
</comment>
<comment type="similarity">
    <text evidence="2">Belongs to the phenol-soluble modulin alpha peptides family.</text>
</comment>
<evidence type="ECO:0000250" key="1">
    <source>
        <dbReference type="UniProtKB" id="A9JX06"/>
    </source>
</evidence>
<evidence type="ECO:0000305" key="2"/>
<sequence length="21" mass="2278">MGIIAGIIKFIKGLIEKFTGK</sequence>
<keyword id="KW-0204">Cytolysis</keyword>
<keyword id="KW-0843">Virulence</keyword>
<name>PSMA2_STAAR</name>
<reference key="1">
    <citation type="journal article" date="2004" name="Proc. Natl. Acad. Sci. U.S.A.">
        <title>Complete genomes of two clinical Staphylococcus aureus strains: evidence for the rapid evolution of virulence and drug resistance.</title>
        <authorList>
            <person name="Holden M.T.G."/>
            <person name="Feil E.J."/>
            <person name="Lindsay J.A."/>
            <person name="Peacock S.J."/>
            <person name="Day N.P.J."/>
            <person name="Enright M.C."/>
            <person name="Foster T.J."/>
            <person name="Moore C.E."/>
            <person name="Hurst L."/>
            <person name="Atkin R."/>
            <person name="Barron A."/>
            <person name="Bason N."/>
            <person name="Bentley S.D."/>
            <person name="Chillingworth C."/>
            <person name="Chillingworth T."/>
            <person name="Churcher C."/>
            <person name="Clark L."/>
            <person name="Corton C."/>
            <person name="Cronin A."/>
            <person name="Doggett J."/>
            <person name="Dowd L."/>
            <person name="Feltwell T."/>
            <person name="Hance Z."/>
            <person name="Harris B."/>
            <person name="Hauser H."/>
            <person name="Holroyd S."/>
            <person name="Jagels K."/>
            <person name="James K.D."/>
            <person name="Lennard N."/>
            <person name="Line A."/>
            <person name="Mayes R."/>
            <person name="Moule S."/>
            <person name="Mungall K."/>
            <person name="Ormond D."/>
            <person name="Quail M.A."/>
            <person name="Rabbinowitsch E."/>
            <person name="Rutherford K.M."/>
            <person name="Sanders M."/>
            <person name="Sharp S."/>
            <person name="Simmonds M."/>
            <person name="Stevens K."/>
            <person name="Whitehead S."/>
            <person name="Barrell B.G."/>
            <person name="Spratt B.G."/>
            <person name="Parkhill J."/>
        </authorList>
    </citation>
    <scope>NUCLEOTIDE SEQUENCE [LARGE SCALE GENOMIC DNA]</scope>
    <source>
        <strain>MRSA252</strain>
    </source>
</reference>
<proteinExistence type="inferred from homology"/>
<protein>
    <recommendedName>
        <fullName>Phenol-soluble modulin alpha 2 peptide</fullName>
    </recommendedName>
</protein>
<accession>P0C800</accession>
<organism>
    <name type="scientific">Staphylococcus aureus (strain MRSA252)</name>
    <dbReference type="NCBI Taxonomy" id="282458"/>
    <lineage>
        <taxon>Bacteria</taxon>
        <taxon>Bacillati</taxon>
        <taxon>Bacillota</taxon>
        <taxon>Bacilli</taxon>
        <taxon>Bacillales</taxon>
        <taxon>Staphylococcaceae</taxon>
        <taxon>Staphylococcus</taxon>
    </lineage>
</organism>
<feature type="peptide" id="PRO_0000345053" description="Phenol-soluble modulin alpha 2 peptide">
    <location>
        <begin position="1"/>
        <end position="21"/>
    </location>
</feature>
<gene>
    <name type="primary">psmA2</name>
    <name type="ordered locus">SAR0451.3</name>
</gene>